<comment type="subunit">
    <text evidence="1">Part of the 50S ribosomal subunit. Contacts protein L32.</text>
</comment>
<comment type="similarity">
    <text evidence="1">Belongs to the bacterial ribosomal protein bL17 family.</text>
</comment>
<feature type="chain" id="PRO_1000055863" description="Large ribosomal subunit protein bL17">
    <location>
        <begin position="1"/>
        <end position="135"/>
    </location>
</feature>
<evidence type="ECO:0000255" key="1">
    <source>
        <dbReference type="HAMAP-Rule" id="MF_01368"/>
    </source>
</evidence>
<evidence type="ECO:0000305" key="2"/>
<gene>
    <name evidence="1" type="primary">rplQ</name>
    <name type="ordered locus">lin2754</name>
</gene>
<dbReference type="EMBL" id="AL596173">
    <property type="protein sequence ID" value="CAC97980.1"/>
    <property type="molecule type" value="Genomic_DNA"/>
</dbReference>
<dbReference type="PIR" id="AD1776">
    <property type="entry name" value="AD1776"/>
</dbReference>
<dbReference type="RefSeq" id="WP_003768456.1">
    <property type="nucleotide sequence ID" value="NC_003212.1"/>
</dbReference>
<dbReference type="SMR" id="Q927N4"/>
<dbReference type="STRING" id="272626.gene:17567141"/>
<dbReference type="GeneID" id="93236027"/>
<dbReference type="KEGG" id="lin:rplQ"/>
<dbReference type="eggNOG" id="COG0203">
    <property type="taxonomic scope" value="Bacteria"/>
</dbReference>
<dbReference type="HOGENOM" id="CLU_074407_2_2_9"/>
<dbReference type="OrthoDB" id="9809073at2"/>
<dbReference type="Proteomes" id="UP000002513">
    <property type="component" value="Chromosome"/>
</dbReference>
<dbReference type="GO" id="GO:0022625">
    <property type="term" value="C:cytosolic large ribosomal subunit"/>
    <property type="evidence" value="ECO:0007669"/>
    <property type="project" value="TreeGrafter"/>
</dbReference>
<dbReference type="GO" id="GO:0003735">
    <property type="term" value="F:structural constituent of ribosome"/>
    <property type="evidence" value="ECO:0007669"/>
    <property type="project" value="InterPro"/>
</dbReference>
<dbReference type="GO" id="GO:0006412">
    <property type="term" value="P:translation"/>
    <property type="evidence" value="ECO:0007669"/>
    <property type="project" value="UniProtKB-UniRule"/>
</dbReference>
<dbReference type="FunFam" id="3.90.1030.10:FF:000002">
    <property type="entry name" value="50S ribosomal protein L17"/>
    <property type="match status" value="1"/>
</dbReference>
<dbReference type="Gene3D" id="3.90.1030.10">
    <property type="entry name" value="Ribosomal protein L17"/>
    <property type="match status" value="1"/>
</dbReference>
<dbReference type="HAMAP" id="MF_01368">
    <property type="entry name" value="Ribosomal_bL17"/>
    <property type="match status" value="1"/>
</dbReference>
<dbReference type="InterPro" id="IPR000456">
    <property type="entry name" value="Ribosomal_bL17"/>
</dbReference>
<dbReference type="InterPro" id="IPR047859">
    <property type="entry name" value="Ribosomal_bL17_CS"/>
</dbReference>
<dbReference type="InterPro" id="IPR036373">
    <property type="entry name" value="Ribosomal_bL17_sf"/>
</dbReference>
<dbReference type="NCBIfam" id="TIGR00059">
    <property type="entry name" value="L17"/>
    <property type="match status" value="1"/>
</dbReference>
<dbReference type="PANTHER" id="PTHR14413:SF16">
    <property type="entry name" value="LARGE RIBOSOMAL SUBUNIT PROTEIN BL17M"/>
    <property type="match status" value="1"/>
</dbReference>
<dbReference type="PANTHER" id="PTHR14413">
    <property type="entry name" value="RIBOSOMAL PROTEIN L17"/>
    <property type="match status" value="1"/>
</dbReference>
<dbReference type="Pfam" id="PF01196">
    <property type="entry name" value="Ribosomal_L17"/>
    <property type="match status" value="1"/>
</dbReference>
<dbReference type="SUPFAM" id="SSF64263">
    <property type="entry name" value="Prokaryotic ribosomal protein L17"/>
    <property type="match status" value="1"/>
</dbReference>
<dbReference type="PROSITE" id="PS01167">
    <property type="entry name" value="RIBOSOMAL_L17"/>
    <property type="match status" value="1"/>
</dbReference>
<organism>
    <name type="scientific">Listeria innocua serovar 6a (strain ATCC BAA-680 / CLIP 11262)</name>
    <dbReference type="NCBI Taxonomy" id="272626"/>
    <lineage>
        <taxon>Bacteria</taxon>
        <taxon>Bacillati</taxon>
        <taxon>Bacillota</taxon>
        <taxon>Bacilli</taxon>
        <taxon>Bacillales</taxon>
        <taxon>Listeriaceae</taxon>
        <taxon>Listeria</taxon>
    </lineage>
</organism>
<reference key="1">
    <citation type="journal article" date="2001" name="Science">
        <title>Comparative genomics of Listeria species.</title>
        <authorList>
            <person name="Glaser P."/>
            <person name="Frangeul L."/>
            <person name="Buchrieser C."/>
            <person name="Rusniok C."/>
            <person name="Amend A."/>
            <person name="Baquero F."/>
            <person name="Berche P."/>
            <person name="Bloecker H."/>
            <person name="Brandt P."/>
            <person name="Chakraborty T."/>
            <person name="Charbit A."/>
            <person name="Chetouani F."/>
            <person name="Couve E."/>
            <person name="de Daruvar A."/>
            <person name="Dehoux P."/>
            <person name="Domann E."/>
            <person name="Dominguez-Bernal G."/>
            <person name="Duchaud E."/>
            <person name="Durant L."/>
            <person name="Dussurget O."/>
            <person name="Entian K.-D."/>
            <person name="Fsihi H."/>
            <person name="Garcia-del Portillo F."/>
            <person name="Garrido P."/>
            <person name="Gautier L."/>
            <person name="Goebel W."/>
            <person name="Gomez-Lopez N."/>
            <person name="Hain T."/>
            <person name="Hauf J."/>
            <person name="Jackson D."/>
            <person name="Jones L.-M."/>
            <person name="Kaerst U."/>
            <person name="Kreft J."/>
            <person name="Kuhn M."/>
            <person name="Kunst F."/>
            <person name="Kurapkat G."/>
            <person name="Madueno E."/>
            <person name="Maitournam A."/>
            <person name="Mata Vicente J."/>
            <person name="Ng E."/>
            <person name="Nedjari H."/>
            <person name="Nordsiek G."/>
            <person name="Novella S."/>
            <person name="de Pablos B."/>
            <person name="Perez-Diaz J.-C."/>
            <person name="Purcell R."/>
            <person name="Remmel B."/>
            <person name="Rose M."/>
            <person name="Schlueter T."/>
            <person name="Simoes N."/>
            <person name="Tierrez A."/>
            <person name="Vazquez-Boland J.-A."/>
            <person name="Voss H."/>
            <person name="Wehland J."/>
            <person name="Cossart P."/>
        </authorList>
    </citation>
    <scope>NUCLEOTIDE SEQUENCE [LARGE SCALE GENOMIC DNA]</scope>
    <source>
        <strain>ATCC BAA-680 / CLIP 11262</strain>
    </source>
</reference>
<keyword id="KW-0687">Ribonucleoprotein</keyword>
<keyword id="KW-0689">Ribosomal protein</keyword>
<proteinExistence type="inferred from homology"/>
<protein>
    <recommendedName>
        <fullName evidence="1">Large ribosomal subunit protein bL17</fullName>
    </recommendedName>
    <alternativeName>
        <fullName evidence="2">50S ribosomal protein L17</fullName>
    </alternativeName>
</protein>
<accession>Q927N4</accession>
<name>RL17_LISIN</name>
<sequence>MGYRKLGRTSSQRKALLRDLATDLIVHERIETTEARAKEIRKVVEKLITSGKKGDLHARRQAAAFIRHEVVEVVQVDAKGKDGSTVKKNRPVYALQKLFDDVAPRYAERQGGYTRILKKGPRRGDGAPMVIIELV</sequence>